<evidence type="ECO:0000250" key="1">
    <source>
        <dbReference type="UniProtKB" id="Q9Y548"/>
    </source>
</evidence>
<evidence type="ECO:0000255" key="2"/>
<evidence type="ECO:0000256" key="3">
    <source>
        <dbReference type="SAM" id="MobiDB-lite"/>
    </source>
</evidence>
<evidence type="ECO:0000305" key="4"/>
<sequence>MAAVDDLQFEEFGNAATSLTANPDATTVNIEDPGETPKHQSGSPRGSGREEDDELLGNDDSDKTELLAGQKKSSPFWTFEYYQTFFDVDTYQVFDRIKGSLLPIPGKNFVRLYIRSNPDLYGPFWICATLVFAIAISGNLSNFLIHLGEKTYRYVPEFRKVSIAATTIYAYAWLVPLALWGFLMWRNSKVMNIVSYSFLEIVCVYGYSLFIYIPTAILWIIPQKAVRWILVMIALGISGSVLAMTFWPAVREDNRRVALATIVTIVLLHMLLSVGCLAYFFDAPEMDHLPTTTATPNQTVAAAKSS</sequence>
<reference key="1">
    <citation type="submission" date="2004-11" db="EMBL/GenBank/DDBJ databases">
        <authorList>
            <consortium name="The German cDNA consortium"/>
        </authorList>
    </citation>
    <scope>NUCLEOTIDE SEQUENCE [LARGE SCALE MRNA]</scope>
    <source>
        <tissue>Kidney</tissue>
    </source>
</reference>
<accession>Q5RBL0</accession>
<keyword id="KW-0967">Endosome</keyword>
<keyword id="KW-0325">Glycoprotein</keyword>
<keyword id="KW-0333">Golgi apparatus</keyword>
<keyword id="KW-0472">Membrane</keyword>
<keyword id="KW-1185">Reference proteome</keyword>
<keyword id="KW-0812">Transmembrane</keyword>
<keyword id="KW-1133">Transmembrane helix</keyword>
<feature type="chain" id="PRO_0000240870" description="Protein YIPF1">
    <location>
        <begin position="1"/>
        <end position="306"/>
    </location>
</feature>
<feature type="topological domain" description="Cytoplasmic" evidence="1">
    <location>
        <begin position="1"/>
        <end position="119"/>
    </location>
</feature>
<feature type="transmembrane region" description="Helical" evidence="2">
    <location>
        <begin position="120"/>
        <end position="140"/>
    </location>
</feature>
<feature type="topological domain" description="Lumenal" evidence="4">
    <location>
        <begin position="141"/>
        <end position="162"/>
    </location>
</feature>
<feature type="transmembrane region" description="Helical" evidence="2">
    <location>
        <begin position="163"/>
        <end position="183"/>
    </location>
</feature>
<feature type="topological domain" description="Cytoplasmic" evidence="4">
    <location>
        <begin position="184"/>
        <end position="200"/>
    </location>
</feature>
<feature type="transmembrane region" description="Helical" evidence="2">
    <location>
        <begin position="201"/>
        <end position="221"/>
    </location>
</feature>
<feature type="topological domain" description="Lumenal" evidence="4">
    <location>
        <begin position="222"/>
        <end position="227"/>
    </location>
</feature>
<feature type="transmembrane region" description="Helical" evidence="2">
    <location>
        <begin position="228"/>
        <end position="248"/>
    </location>
</feature>
<feature type="topological domain" description="Cytoplasmic" evidence="4">
    <location>
        <begin position="249"/>
        <end position="256"/>
    </location>
</feature>
<feature type="transmembrane region" description="Helical" evidence="2">
    <location>
        <begin position="257"/>
        <end position="277"/>
    </location>
</feature>
<feature type="topological domain" description="Lumenal" evidence="1">
    <location>
        <begin position="278"/>
        <end position="306"/>
    </location>
</feature>
<feature type="region of interest" description="Disordered" evidence="3">
    <location>
        <begin position="14"/>
        <end position="62"/>
    </location>
</feature>
<feature type="compositionally biased region" description="Polar residues" evidence="3">
    <location>
        <begin position="15"/>
        <end position="29"/>
    </location>
</feature>
<feature type="compositionally biased region" description="Acidic residues" evidence="3">
    <location>
        <begin position="50"/>
        <end position="59"/>
    </location>
</feature>
<feature type="glycosylation site" description="N-linked (GlcNAc...) asparagine" evidence="2">
    <location>
        <position position="297"/>
    </location>
</feature>
<dbReference type="EMBL" id="CR858630">
    <property type="protein sequence ID" value="CAH90850.1"/>
    <property type="molecule type" value="mRNA"/>
</dbReference>
<dbReference type="RefSeq" id="NP_001125485.1">
    <property type="nucleotide sequence ID" value="NM_001132013.1"/>
</dbReference>
<dbReference type="SMR" id="Q5RBL0"/>
<dbReference type="FunCoup" id="Q5RBL0">
    <property type="interactions" value="1761"/>
</dbReference>
<dbReference type="STRING" id="9601.ENSPPYP00000001546"/>
<dbReference type="GlyCosmos" id="Q5RBL0">
    <property type="glycosylation" value="1 site, No reported glycans"/>
</dbReference>
<dbReference type="GeneID" id="100172394"/>
<dbReference type="KEGG" id="pon:100172394"/>
<dbReference type="CTD" id="54432"/>
<dbReference type="eggNOG" id="KOG3114">
    <property type="taxonomic scope" value="Eukaryota"/>
</dbReference>
<dbReference type="InParanoid" id="Q5RBL0"/>
<dbReference type="OrthoDB" id="10256463at2759"/>
<dbReference type="Proteomes" id="UP000001595">
    <property type="component" value="Unplaced"/>
</dbReference>
<dbReference type="GO" id="GO:0005797">
    <property type="term" value="C:Golgi medial cisterna"/>
    <property type="evidence" value="ECO:0000250"/>
    <property type="project" value="UniProtKB"/>
</dbReference>
<dbReference type="GO" id="GO:0000138">
    <property type="term" value="C:Golgi trans cisterna"/>
    <property type="evidence" value="ECO:0000250"/>
    <property type="project" value="UniProtKB"/>
</dbReference>
<dbReference type="GO" id="GO:0031902">
    <property type="term" value="C:late endosome membrane"/>
    <property type="evidence" value="ECO:0007669"/>
    <property type="project" value="UniProtKB-SubCell"/>
</dbReference>
<dbReference type="GO" id="GO:0005802">
    <property type="term" value="C:trans-Golgi network"/>
    <property type="evidence" value="ECO:0000250"/>
    <property type="project" value="UniProtKB"/>
</dbReference>
<dbReference type="GO" id="GO:0031267">
    <property type="term" value="F:small GTPase binding"/>
    <property type="evidence" value="ECO:0007669"/>
    <property type="project" value="InterPro"/>
</dbReference>
<dbReference type="GO" id="GO:0016192">
    <property type="term" value="P:vesicle-mediated transport"/>
    <property type="evidence" value="ECO:0007669"/>
    <property type="project" value="InterPro"/>
</dbReference>
<dbReference type="InterPro" id="IPR006977">
    <property type="entry name" value="Yip1_dom"/>
</dbReference>
<dbReference type="InterPro" id="IPR039765">
    <property type="entry name" value="Yip5/YIPF1/YIPF2"/>
</dbReference>
<dbReference type="PANTHER" id="PTHR12822">
    <property type="entry name" value="PROTEIN YIPF"/>
    <property type="match status" value="1"/>
</dbReference>
<dbReference type="PANTHER" id="PTHR12822:SF4">
    <property type="entry name" value="PROTEIN YIPF1"/>
    <property type="match status" value="1"/>
</dbReference>
<dbReference type="Pfam" id="PF04893">
    <property type="entry name" value="Yip1"/>
    <property type="match status" value="1"/>
</dbReference>
<comment type="subunit">
    <text evidence="1">Interacts with YIPF6; this interaction may stabilize YIPF1. May also form a ternary complex with YIPF2 and YIPF6.</text>
</comment>
<comment type="subcellular location">
    <subcellularLocation>
        <location evidence="1">Golgi apparatus</location>
        <location evidence="1">cis-Golgi network membrane</location>
        <topology evidence="1">Multi-pass membrane protein</topology>
    </subcellularLocation>
    <subcellularLocation>
        <location evidence="1">Golgi apparatus</location>
        <location evidence="1">trans-Golgi network membrane</location>
    </subcellularLocation>
    <subcellularLocation>
        <location evidence="1">Late endosome membrane</location>
    </subcellularLocation>
    <text evidence="1">Mainly localizes within medial-/trans-Golgi and trans-Golgi network (TGN), while less so within cis-Golgi.</text>
</comment>
<comment type="similarity">
    <text evidence="4">Belongs to the YIP1 family.</text>
</comment>
<proteinExistence type="evidence at transcript level"/>
<name>YIPF1_PONAB</name>
<protein>
    <recommendedName>
        <fullName>Protein YIPF1</fullName>
    </recommendedName>
    <alternativeName>
        <fullName>YIP1 family member 1</fullName>
    </alternativeName>
</protein>
<organism>
    <name type="scientific">Pongo abelii</name>
    <name type="common">Sumatran orangutan</name>
    <name type="synonym">Pongo pygmaeus abelii</name>
    <dbReference type="NCBI Taxonomy" id="9601"/>
    <lineage>
        <taxon>Eukaryota</taxon>
        <taxon>Metazoa</taxon>
        <taxon>Chordata</taxon>
        <taxon>Craniata</taxon>
        <taxon>Vertebrata</taxon>
        <taxon>Euteleostomi</taxon>
        <taxon>Mammalia</taxon>
        <taxon>Eutheria</taxon>
        <taxon>Euarchontoglires</taxon>
        <taxon>Primates</taxon>
        <taxon>Haplorrhini</taxon>
        <taxon>Catarrhini</taxon>
        <taxon>Hominidae</taxon>
        <taxon>Pongo</taxon>
    </lineage>
</organism>
<gene>
    <name type="primary">YIPF1</name>
</gene>